<keyword id="KW-0256">Endoplasmic reticulum</keyword>
<keyword id="KW-0445">Lipid transport</keyword>
<keyword id="KW-0446">Lipid-binding</keyword>
<keyword id="KW-0472">Membrane</keyword>
<keyword id="KW-1185">Reference proteome</keyword>
<keyword id="KW-0812">Transmembrane</keyword>
<keyword id="KW-1133">Transmembrane helix</keyword>
<keyword id="KW-0813">Transport</keyword>
<name>MMM1_ASPCL</name>
<reference key="1">
    <citation type="journal article" date="2008" name="PLoS Genet.">
        <title>Genomic islands in the pathogenic filamentous fungus Aspergillus fumigatus.</title>
        <authorList>
            <person name="Fedorova N.D."/>
            <person name="Khaldi N."/>
            <person name="Joardar V.S."/>
            <person name="Maiti R."/>
            <person name="Amedeo P."/>
            <person name="Anderson M.J."/>
            <person name="Crabtree J."/>
            <person name="Silva J.C."/>
            <person name="Badger J.H."/>
            <person name="Albarraq A."/>
            <person name="Angiuoli S."/>
            <person name="Bussey H."/>
            <person name="Bowyer P."/>
            <person name="Cotty P.J."/>
            <person name="Dyer P.S."/>
            <person name="Egan A."/>
            <person name="Galens K."/>
            <person name="Fraser-Liggett C.M."/>
            <person name="Haas B.J."/>
            <person name="Inman J.M."/>
            <person name="Kent R."/>
            <person name="Lemieux S."/>
            <person name="Malavazi I."/>
            <person name="Orvis J."/>
            <person name="Roemer T."/>
            <person name="Ronning C.M."/>
            <person name="Sundaram J.P."/>
            <person name="Sutton G."/>
            <person name="Turner G."/>
            <person name="Venter J.C."/>
            <person name="White O.R."/>
            <person name="Whitty B.R."/>
            <person name="Youngman P."/>
            <person name="Wolfe K.H."/>
            <person name="Goldman G.H."/>
            <person name="Wortman J.R."/>
            <person name="Jiang B."/>
            <person name="Denning D.W."/>
            <person name="Nierman W.C."/>
        </authorList>
    </citation>
    <scope>NUCLEOTIDE SEQUENCE [LARGE SCALE GENOMIC DNA]</scope>
    <source>
        <strain>ATCC 1007 / CBS 513.65 / DSM 816 / NCTC 3887 / NRRL 1 / QM 1276 / 107</strain>
    </source>
</reference>
<protein>
    <recommendedName>
        <fullName evidence="1">Maintenance of mitochondrial morphology protein 1</fullName>
    </recommendedName>
</protein>
<sequence>MSSQPGDPATLPAQSSLSFTQGFLLGQLSVVLVLAAFIKFFIFGEAPPPPSRGLSHRSATHRRSNSIYSNSPQEAGSRSLREKPSTSNVLRPVPSSSTNTRSILRKTYYSAIPTNPAKHGRLRIHHSSHQPESLDWFNVLIAQTIAQYRQTAYSLKDSPTSSILNSLTAALNNPEKKPAFIDKITVTDISLGEEFPIFSNCRIIAVDDPNSDGGRLQALMDVDLSDDNLSIAIETQLLLNYPKPCSAILPVALSISVVRFSGTLCISLVPASTPPLDTPSHSPSPPTADTATSGRSKPGDKAGGNQPRSNGSTEDPAGGNPPKTSPKSNVAFSFLPDYRLDLSVRSLIGSRSRLQDVPKVAQLVEARVQAWFEERVVEPRVQVVGLPDLWPRMGRTGVRTGDDAETASNGPRSTVSADIGGSARHEELAREPEALRFRGLLGARPPFDVASRTSSFNVETGDLRSRSMTRQESSGDLSDQLHIPGSLPEAVTPG</sequence>
<accession>A1CM86</accession>
<comment type="function">
    <text evidence="1">Component of the ERMES/MDM complex, which serves as a molecular tether to connect the endoplasmic reticulum (ER) and mitochondria. Components of this complex are involved in the control of mitochondrial shape and protein biogenesis, and function in nonvesicular lipid trafficking between the ER and mitochondria. The mdm12-mmm1 subcomplex functions in the major beta-barrel assembly pathway that is responsible for biogenesis of all outer membrane beta-barrel proteins, and acts in a late step after the SAM complex. The mdm10-mdm12-mmm1 subcomplex further acts in the TOM40-specific pathway after the action of the mdm12-mmm1 complex. Essential for establishing and maintaining the structure of mitochondria and maintenance of mtDNA nucleoids.</text>
</comment>
<comment type="subunit">
    <text evidence="1">Homodimer. Component of the ER-mitochondria encounter structure (ERMES) or MDM complex, composed of mmm1, mdm10, mdm12 and mdm34. A mmm1 homodimer associates with one molecule of mdm12 on each side in a pairwise head-to-tail manner, and the SMP-LTD domains of mmm1 and mdm12 generate a continuous hydrophobic tunnel for phospholipid trafficking.</text>
</comment>
<comment type="subcellular location">
    <subcellularLocation>
        <location evidence="1">Endoplasmic reticulum membrane</location>
        <topology evidence="1">Single-pass type I membrane protein</topology>
    </subcellularLocation>
    <text evidence="1">The ERMES/MDM complex localizes to a few discrete foci (around 10 per single cell), that represent mitochondria-endoplasmic reticulum junctions. These foci are often found next to mtDNA nucleoids.</text>
</comment>
<comment type="domain">
    <text evidence="1">The SMP-LTD domain is a barrel-like domain that can bind various types of glycerophospholipids in its interior and mediate their transfer between two adjacent bilayers.</text>
</comment>
<comment type="similarity">
    <text evidence="1">Belongs to the MMM1 family.</text>
</comment>
<gene>
    <name evidence="1" type="primary">mmm1</name>
    <name type="ORF">ACLA_096060</name>
</gene>
<evidence type="ECO:0000255" key="1">
    <source>
        <dbReference type="HAMAP-Rule" id="MF_03103"/>
    </source>
</evidence>
<evidence type="ECO:0000256" key="2">
    <source>
        <dbReference type="SAM" id="MobiDB-lite"/>
    </source>
</evidence>
<feature type="chain" id="PRO_0000384212" description="Maintenance of mitochondrial morphology protein 1">
    <location>
        <begin position="1"/>
        <end position="494"/>
    </location>
</feature>
<feature type="topological domain" description="Lumenal" evidence="1">
    <location>
        <begin position="1"/>
        <end position="22"/>
    </location>
</feature>
<feature type="transmembrane region" description="Helical" evidence="1">
    <location>
        <begin position="23"/>
        <end position="43"/>
    </location>
</feature>
<feature type="topological domain" description="Cytoplasmic" evidence="1">
    <location>
        <begin position="44"/>
        <end position="494"/>
    </location>
</feature>
<feature type="domain" description="SMP-LTD" evidence="1">
    <location>
        <begin position="130"/>
        <end position="387"/>
    </location>
</feature>
<feature type="region of interest" description="Disordered" evidence="2">
    <location>
        <begin position="50"/>
        <end position="98"/>
    </location>
</feature>
<feature type="region of interest" description="Disordered" evidence="2">
    <location>
        <begin position="274"/>
        <end position="330"/>
    </location>
</feature>
<feature type="region of interest" description="Disordered" evidence="2">
    <location>
        <begin position="398"/>
        <end position="426"/>
    </location>
</feature>
<feature type="region of interest" description="Disordered" evidence="2">
    <location>
        <begin position="449"/>
        <end position="494"/>
    </location>
</feature>
<feature type="compositionally biased region" description="Basic residues" evidence="2">
    <location>
        <begin position="54"/>
        <end position="64"/>
    </location>
</feature>
<feature type="compositionally biased region" description="Polar residues" evidence="2">
    <location>
        <begin position="65"/>
        <end position="76"/>
    </location>
</feature>
<feature type="compositionally biased region" description="Polar residues" evidence="2">
    <location>
        <begin position="85"/>
        <end position="98"/>
    </location>
</feature>
<feature type="compositionally biased region" description="Pro residues" evidence="2">
    <location>
        <begin position="274"/>
        <end position="286"/>
    </location>
</feature>
<feature type="compositionally biased region" description="Polar residues" evidence="2">
    <location>
        <begin position="406"/>
        <end position="416"/>
    </location>
</feature>
<feature type="compositionally biased region" description="Polar residues" evidence="2">
    <location>
        <begin position="466"/>
        <end position="477"/>
    </location>
</feature>
<proteinExistence type="inferred from homology"/>
<organism>
    <name type="scientific">Aspergillus clavatus (strain ATCC 1007 / CBS 513.65 / DSM 816 / NCTC 3887 / NRRL 1 / QM 1276 / 107)</name>
    <dbReference type="NCBI Taxonomy" id="344612"/>
    <lineage>
        <taxon>Eukaryota</taxon>
        <taxon>Fungi</taxon>
        <taxon>Dikarya</taxon>
        <taxon>Ascomycota</taxon>
        <taxon>Pezizomycotina</taxon>
        <taxon>Eurotiomycetes</taxon>
        <taxon>Eurotiomycetidae</taxon>
        <taxon>Eurotiales</taxon>
        <taxon>Aspergillaceae</taxon>
        <taxon>Aspergillus</taxon>
        <taxon>Aspergillus subgen. Fumigati</taxon>
    </lineage>
</organism>
<dbReference type="EMBL" id="DS027058">
    <property type="protein sequence ID" value="EAW08673.1"/>
    <property type="molecule type" value="Genomic_DNA"/>
</dbReference>
<dbReference type="RefSeq" id="XP_001270099.1">
    <property type="nucleotide sequence ID" value="XM_001270098.1"/>
</dbReference>
<dbReference type="SMR" id="A1CM86"/>
<dbReference type="STRING" id="344612.A1CM86"/>
<dbReference type="EnsemblFungi" id="EAW08673">
    <property type="protein sequence ID" value="EAW08673"/>
    <property type="gene ID" value="ACLA_096060"/>
</dbReference>
<dbReference type="GeneID" id="4702260"/>
<dbReference type="KEGG" id="act:ACLA_096060"/>
<dbReference type="VEuPathDB" id="FungiDB:ACLA_096060"/>
<dbReference type="eggNOG" id="ENOG502QUUW">
    <property type="taxonomic scope" value="Eukaryota"/>
</dbReference>
<dbReference type="HOGENOM" id="CLU_032730_1_0_1"/>
<dbReference type="OMA" id="WSFTQGL"/>
<dbReference type="OrthoDB" id="5376138at2759"/>
<dbReference type="Proteomes" id="UP000006701">
    <property type="component" value="Unassembled WGS sequence"/>
</dbReference>
<dbReference type="GO" id="GO:0005789">
    <property type="term" value="C:endoplasmic reticulum membrane"/>
    <property type="evidence" value="ECO:0007669"/>
    <property type="project" value="UniProtKB-SubCell"/>
</dbReference>
<dbReference type="GO" id="GO:0032865">
    <property type="term" value="C:ERMES complex"/>
    <property type="evidence" value="ECO:0007669"/>
    <property type="project" value="UniProtKB-UniRule"/>
</dbReference>
<dbReference type="GO" id="GO:0008289">
    <property type="term" value="F:lipid binding"/>
    <property type="evidence" value="ECO:0007669"/>
    <property type="project" value="UniProtKB-KW"/>
</dbReference>
<dbReference type="GO" id="GO:0000002">
    <property type="term" value="P:mitochondrial genome maintenance"/>
    <property type="evidence" value="ECO:0007669"/>
    <property type="project" value="UniProtKB-UniRule"/>
</dbReference>
<dbReference type="GO" id="GO:1990456">
    <property type="term" value="P:mitochondrion-endoplasmic reticulum membrane tethering"/>
    <property type="evidence" value="ECO:0007669"/>
    <property type="project" value="TreeGrafter"/>
</dbReference>
<dbReference type="GO" id="GO:0015914">
    <property type="term" value="P:phospholipid transport"/>
    <property type="evidence" value="ECO:0007669"/>
    <property type="project" value="TreeGrafter"/>
</dbReference>
<dbReference type="GO" id="GO:0045040">
    <property type="term" value="P:protein insertion into mitochondrial outer membrane"/>
    <property type="evidence" value="ECO:0007669"/>
    <property type="project" value="UniProtKB-UniRule"/>
</dbReference>
<dbReference type="CDD" id="cd21671">
    <property type="entry name" value="SMP_Mmm1"/>
    <property type="match status" value="1"/>
</dbReference>
<dbReference type="HAMAP" id="MF_03103">
    <property type="entry name" value="Mmm1"/>
    <property type="match status" value="1"/>
</dbReference>
<dbReference type="InterPro" id="IPR027537">
    <property type="entry name" value="Mmm1"/>
</dbReference>
<dbReference type="InterPro" id="IPR019411">
    <property type="entry name" value="MMM1_dom"/>
</dbReference>
<dbReference type="InterPro" id="IPR031468">
    <property type="entry name" value="SMP_LBD"/>
</dbReference>
<dbReference type="PANTHER" id="PTHR13466:SF0">
    <property type="entry name" value="SMP-LTD DOMAIN-CONTAINING PROTEIN"/>
    <property type="match status" value="1"/>
</dbReference>
<dbReference type="PANTHER" id="PTHR13466">
    <property type="entry name" value="TEX2 PROTEIN-RELATED"/>
    <property type="match status" value="1"/>
</dbReference>
<dbReference type="Pfam" id="PF10296">
    <property type="entry name" value="MMM1"/>
    <property type="match status" value="1"/>
</dbReference>
<dbReference type="PROSITE" id="PS51847">
    <property type="entry name" value="SMP"/>
    <property type="match status" value="1"/>
</dbReference>